<accession>Q6BT60</accession>
<protein>
    <recommendedName>
        <fullName>U2 small nuclear ribonucleoprotein A'</fullName>
        <shortName>U2 snRNP A'</shortName>
    </recommendedName>
</protein>
<evidence type="ECO:0000250" key="1"/>
<evidence type="ECO:0000305" key="2"/>
<keyword id="KW-0433">Leucine-rich repeat</keyword>
<keyword id="KW-0507">mRNA processing</keyword>
<keyword id="KW-0508">mRNA splicing</keyword>
<keyword id="KW-0539">Nucleus</keyword>
<keyword id="KW-1185">Reference proteome</keyword>
<keyword id="KW-0677">Repeat</keyword>
<keyword id="KW-0747">Spliceosome</keyword>
<gene>
    <name type="primary">LEA1</name>
    <name type="ordered locus">DEHA2D03278g</name>
</gene>
<reference key="1">
    <citation type="journal article" date="2004" name="Nature">
        <title>Genome evolution in yeasts.</title>
        <authorList>
            <person name="Dujon B."/>
            <person name="Sherman D."/>
            <person name="Fischer G."/>
            <person name="Durrens P."/>
            <person name="Casaregola S."/>
            <person name="Lafontaine I."/>
            <person name="de Montigny J."/>
            <person name="Marck C."/>
            <person name="Neuveglise C."/>
            <person name="Talla E."/>
            <person name="Goffard N."/>
            <person name="Frangeul L."/>
            <person name="Aigle M."/>
            <person name="Anthouard V."/>
            <person name="Babour A."/>
            <person name="Barbe V."/>
            <person name="Barnay S."/>
            <person name="Blanchin S."/>
            <person name="Beckerich J.-M."/>
            <person name="Beyne E."/>
            <person name="Bleykasten C."/>
            <person name="Boisrame A."/>
            <person name="Boyer J."/>
            <person name="Cattolico L."/>
            <person name="Confanioleri F."/>
            <person name="de Daruvar A."/>
            <person name="Despons L."/>
            <person name="Fabre E."/>
            <person name="Fairhead C."/>
            <person name="Ferry-Dumazet H."/>
            <person name="Groppi A."/>
            <person name="Hantraye F."/>
            <person name="Hennequin C."/>
            <person name="Jauniaux N."/>
            <person name="Joyet P."/>
            <person name="Kachouri R."/>
            <person name="Kerrest A."/>
            <person name="Koszul R."/>
            <person name="Lemaire M."/>
            <person name="Lesur I."/>
            <person name="Ma L."/>
            <person name="Muller H."/>
            <person name="Nicaud J.-M."/>
            <person name="Nikolski M."/>
            <person name="Oztas S."/>
            <person name="Ozier-Kalogeropoulos O."/>
            <person name="Pellenz S."/>
            <person name="Potier S."/>
            <person name="Richard G.-F."/>
            <person name="Straub M.-L."/>
            <person name="Suleau A."/>
            <person name="Swennen D."/>
            <person name="Tekaia F."/>
            <person name="Wesolowski-Louvel M."/>
            <person name="Westhof E."/>
            <person name="Wirth B."/>
            <person name="Zeniou-Meyer M."/>
            <person name="Zivanovic Y."/>
            <person name="Bolotin-Fukuhara M."/>
            <person name="Thierry A."/>
            <person name="Bouchier C."/>
            <person name="Caudron B."/>
            <person name="Scarpelli C."/>
            <person name="Gaillardin C."/>
            <person name="Weissenbach J."/>
            <person name="Wincker P."/>
            <person name="Souciet J.-L."/>
        </authorList>
    </citation>
    <scope>NUCLEOTIDE SEQUENCE [LARGE SCALE GENOMIC DNA]</scope>
    <source>
        <strain>ATCC 36239 / CBS 767 / BCRC 21394 / JCM 1990 / NBRC 0083 / IGC 2968</strain>
    </source>
</reference>
<sequence>MRLTSQVLSDAPTIINPEKQVTLSLRSLKIPYLENLGITKDTYEVIDLTDNELIELSNFPRLKNLKVLLVGNNNITGINDDKLPNNLPHLQSISFIHNNISKFSDVRILCRFKNLSNITFIENPITDSPNYRYFIVWLIPTLKVLDFSKVKQKELVKAKELFGESIDDPSELALSMLEDISTTESRKNQISSKDIRNLQDVGKKLTDEDKAKLLQELETADSVEDIERIERALHNGHM</sequence>
<name>RU2A_DEBHA</name>
<comment type="function">
    <text evidence="1">Involved in pre-mRNA splicing.</text>
</comment>
<comment type="subunit">
    <text evidence="1">Associated with the spliceosome.</text>
</comment>
<comment type="subcellular location">
    <subcellularLocation>
        <location evidence="1">Nucleus</location>
    </subcellularLocation>
</comment>
<comment type="similarity">
    <text evidence="2">Belongs to the U2 small nuclear ribonucleoprotein A family.</text>
</comment>
<dbReference type="EMBL" id="CR382136">
    <property type="protein sequence ID" value="CAG86745.2"/>
    <property type="molecule type" value="Genomic_DNA"/>
</dbReference>
<dbReference type="RefSeq" id="XP_458610.2">
    <property type="nucleotide sequence ID" value="XM_458610.1"/>
</dbReference>
<dbReference type="SMR" id="Q6BT60"/>
<dbReference type="FunCoup" id="Q6BT60">
    <property type="interactions" value="1330"/>
</dbReference>
<dbReference type="STRING" id="284592.Q6BT60"/>
<dbReference type="GeneID" id="2901395"/>
<dbReference type="KEGG" id="dha:DEHA2D03278g"/>
<dbReference type="VEuPathDB" id="FungiDB:DEHA2D03278g"/>
<dbReference type="eggNOG" id="KOG1644">
    <property type="taxonomic scope" value="Eukaryota"/>
</dbReference>
<dbReference type="HOGENOM" id="CLU_061027_3_0_1"/>
<dbReference type="InParanoid" id="Q6BT60"/>
<dbReference type="OMA" id="PNYREYM"/>
<dbReference type="OrthoDB" id="433501at2759"/>
<dbReference type="Proteomes" id="UP000000599">
    <property type="component" value="Chromosome D"/>
</dbReference>
<dbReference type="GO" id="GO:0071014">
    <property type="term" value="C:post-mRNA release spliceosomal complex"/>
    <property type="evidence" value="ECO:0007669"/>
    <property type="project" value="EnsemblFungi"/>
</dbReference>
<dbReference type="GO" id="GO:0005686">
    <property type="term" value="C:U2 snRNP"/>
    <property type="evidence" value="ECO:0007669"/>
    <property type="project" value="EnsemblFungi"/>
</dbReference>
<dbReference type="GO" id="GO:0030620">
    <property type="term" value="F:U2 snRNA binding"/>
    <property type="evidence" value="ECO:0007669"/>
    <property type="project" value="InterPro"/>
</dbReference>
<dbReference type="GO" id="GO:0000398">
    <property type="term" value="P:mRNA splicing, via spliceosome"/>
    <property type="evidence" value="ECO:0007669"/>
    <property type="project" value="InterPro"/>
</dbReference>
<dbReference type="Gene3D" id="3.80.10.10">
    <property type="entry name" value="Ribonuclease Inhibitor"/>
    <property type="match status" value="1"/>
</dbReference>
<dbReference type="InterPro" id="IPR032675">
    <property type="entry name" value="LRR_dom_sf"/>
</dbReference>
<dbReference type="InterPro" id="IPR044640">
    <property type="entry name" value="RU2A"/>
</dbReference>
<dbReference type="PANTHER" id="PTHR10552">
    <property type="entry name" value="U2 SMALL NUCLEAR RIBONUCLEOPROTEIN A"/>
    <property type="match status" value="1"/>
</dbReference>
<dbReference type="PANTHER" id="PTHR10552:SF6">
    <property type="entry name" value="U2 SMALL NUCLEAR RIBONUCLEOPROTEIN A"/>
    <property type="match status" value="1"/>
</dbReference>
<dbReference type="Pfam" id="PF14580">
    <property type="entry name" value="LRR_9"/>
    <property type="match status" value="1"/>
</dbReference>
<dbReference type="SUPFAM" id="SSF52058">
    <property type="entry name" value="L domain-like"/>
    <property type="match status" value="1"/>
</dbReference>
<proteinExistence type="inferred from homology"/>
<organism>
    <name type="scientific">Debaryomyces hansenii (strain ATCC 36239 / CBS 767 / BCRC 21394 / JCM 1990 / NBRC 0083 / IGC 2968)</name>
    <name type="common">Yeast</name>
    <name type="synonym">Torulaspora hansenii</name>
    <dbReference type="NCBI Taxonomy" id="284592"/>
    <lineage>
        <taxon>Eukaryota</taxon>
        <taxon>Fungi</taxon>
        <taxon>Dikarya</taxon>
        <taxon>Ascomycota</taxon>
        <taxon>Saccharomycotina</taxon>
        <taxon>Pichiomycetes</taxon>
        <taxon>Debaryomycetaceae</taxon>
        <taxon>Debaryomyces</taxon>
    </lineage>
</organism>
<feature type="chain" id="PRO_0000074183" description="U2 small nuclear ribonucleoprotein A'">
    <location>
        <begin position="1"/>
        <end position="238"/>
    </location>
</feature>
<feature type="repeat" description="LRR 1">
    <location>
        <begin position="19"/>
        <end position="40"/>
    </location>
</feature>
<feature type="repeat" description="LRR 2">
    <location>
        <begin position="42"/>
        <end position="63"/>
    </location>
</feature>
<feature type="repeat" description="LRR 3">
    <location>
        <begin position="64"/>
        <end position="84"/>
    </location>
</feature>
<feature type="repeat" description="LRR 4">
    <location>
        <begin position="89"/>
        <end position="110"/>
    </location>
</feature>
<feature type="domain" description="LRRCT">
    <location>
        <begin position="123"/>
        <end position="161"/>
    </location>
</feature>